<protein>
    <recommendedName>
        <fullName>Intron-encoded DNA endonuclease aI5 alpha</fullName>
    </recommendedName>
    <alternativeName>
        <fullName>DNA endonuclease I-SceIV</fullName>
    </alternativeName>
    <component>
        <recommendedName>
            <fullName>Truncated non-functional cytochrome oxidase 1</fullName>
        </recommendedName>
    </component>
    <component>
        <recommendedName>
            <fullName>DNA endonuclease aI5 alpha</fullName>
            <ecNumber>3.1.-.-</ecNumber>
        </recommendedName>
        <alternativeName>
            <fullName>Intron-encoded endonuclease I-SceIV</fullName>
        </alternativeName>
    </component>
</protein>
<dbReference type="EC" id="3.1.-.-"/>
<dbReference type="EMBL" id="KP263414">
    <property type="protein sequence ID" value="AIZ98882.1"/>
    <property type="molecule type" value="Genomic_DNA"/>
</dbReference>
<dbReference type="PIR" id="S78650">
    <property type="entry name" value="S78650"/>
</dbReference>
<dbReference type="RefSeq" id="NP_009306.1">
    <property type="nucleotide sequence ID" value="NC_001224.1"/>
</dbReference>
<dbReference type="SMR" id="Q9ZZX1"/>
<dbReference type="BioGRID" id="34789">
    <property type="interactions" value="2"/>
</dbReference>
<dbReference type="FunCoup" id="Q9ZZX1">
    <property type="interactions" value="18"/>
</dbReference>
<dbReference type="STRING" id="4932.Q0070"/>
<dbReference type="PaxDb" id="4932-Q0070"/>
<dbReference type="PeptideAtlas" id="Q9ZZX1"/>
<dbReference type="EnsemblFungi" id="Q0070_mRNA">
    <property type="protein sequence ID" value="Q0070"/>
    <property type="gene ID" value="Q0070"/>
</dbReference>
<dbReference type="GeneID" id="854597"/>
<dbReference type="KEGG" id="sce:Q0070"/>
<dbReference type="AGR" id="SGD:S000007265"/>
<dbReference type="SGD" id="S000007265">
    <property type="gene designation" value="AI5_ALPHA"/>
</dbReference>
<dbReference type="VEuPathDB" id="FungiDB:Q0070"/>
<dbReference type="eggNOG" id="KOG4769">
    <property type="taxonomic scope" value="Eukaryota"/>
</dbReference>
<dbReference type="GeneTree" id="ENSGT00390000001518"/>
<dbReference type="HOGENOM" id="CLU_434271_0_0_1"/>
<dbReference type="InParanoid" id="Q9ZZX1"/>
<dbReference type="OrthoDB" id="5274855at2759"/>
<dbReference type="BioCyc" id="YEAST:G3O-34376-MONOMER"/>
<dbReference type="PRO" id="PR:Q9ZZX1"/>
<dbReference type="Proteomes" id="UP000002311">
    <property type="component" value="Mitochondrion"/>
</dbReference>
<dbReference type="RNAct" id="Q9ZZX1">
    <property type="molecule type" value="protein"/>
</dbReference>
<dbReference type="GO" id="GO:0005739">
    <property type="term" value="C:mitochondrion"/>
    <property type="evidence" value="ECO:0000304"/>
    <property type="project" value="SGD"/>
</dbReference>
<dbReference type="GO" id="GO:0045277">
    <property type="term" value="C:respiratory chain complex IV"/>
    <property type="evidence" value="ECO:0000318"/>
    <property type="project" value="GO_Central"/>
</dbReference>
<dbReference type="GO" id="GO:0004129">
    <property type="term" value="F:cytochrome-c oxidase activity"/>
    <property type="evidence" value="ECO:0007669"/>
    <property type="project" value="InterPro"/>
</dbReference>
<dbReference type="GO" id="GO:0004519">
    <property type="term" value="F:endonuclease activity"/>
    <property type="evidence" value="ECO:0000315"/>
    <property type="project" value="SGD"/>
</dbReference>
<dbReference type="GO" id="GO:0020037">
    <property type="term" value="F:heme binding"/>
    <property type="evidence" value="ECO:0007669"/>
    <property type="project" value="InterPro"/>
</dbReference>
<dbReference type="GO" id="GO:0009060">
    <property type="term" value="P:aerobic respiration"/>
    <property type="evidence" value="ECO:0000318"/>
    <property type="project" value="GO_Central"/>
</dbReference>
<dbReference type="GO" id="GO:0006316">
    <property type="term" value="P:movement of group I intron"/>
    <property type="evidence" value="ECO:0000315"/>
    <property type="project" value="SGD"/>
</dbReference>
<dbReference type="GO" id="GO:0006397">
    <property type="term" value="P:mRNA processing"/>
    <property type="evidence" value="ECO:0007669"/>
    <property type="project" value="UniProtKB-KW"/>
</dbReference>
<dbReference type="GO" id="GO:0022904">
    <property type="term" value="P:respiratory electron transport chain"/>
    <property type="evidence" value="ECO:0000318"/>
    <property type="project" value="GO_Central"/>
</dbReference>
<dbReference type="GO" id="GO:0008380">
    <property type="term" value="P:RNA splicing"/>
    <property type="evidence" value="ECO:0007669"/>
    <property type="project" value="UniProtKB-KW"/>
</dbReference>
<dbReference type="FunFam" id="3.10.28.10:FF:000026">
    <property type="entry name" value="Intron-encoded DNA endonuclease aI5 alpha"/>
    <property type="match status" value="1"/>
</dbReference>
<dbReference type="FunFam" id="3.10.28.10:FF:000005">
    <property type="entry name" value="Pentatricopeptide repeat-containing protein At2g15820, chloroplastic"/>
    <property type="match status" value="1"/>
</dbReference>
<dbReference type="FunFam" id="1.20.210.10:FF:000014">
    <property type="entry name" value="Probable intron-encoded endonuclease aI4"/>
    <property type="match status" value="1"/>
</dbReference>
<dbReference type="Gene3D" id="1.20.210.10">
    <property type="entry name" value="Cytochrome c oxidase-like, subunit I domain"/>
    <property type="match status" value="1"/>
</dbReference>
<dbReference type="Gene3D" id="3.10.28.10">
    <property type="entry name" value="Homing endonucleases"/>
    <property type="match status" value="2"/>
</dbReference>
<dbReference type="InterPro" id="IPR023616">
    <property type="entry name" value="Cyt_c_oxase-like_su1_dom"/>
</dbReference>
<dbReference type="InterPro" id="IPR036927">
    <property type="entry name" value="Cyt_c_oxase-like_su1_sf"/>
</dbReference>
<dbReference type="InterPro" id="IPR000883">
    <property type="entry name" value="Cyt_C_Oxase_1"/>
</dbReference>
<dbReference type="InterPro" id="IPR023615">
    <property type="entry name" value="Cyt_c_Oxase_su1_BS"/>
</dbReference>
<dbReference type="InterPro" id="IPR027434">
    <property type="entry name" value="Homing_endonucl"/>
</dbReference>
<dbReference type="InterPro" id="IPR004860">
    <property type="entry name" value="LAGLIDADG_dom"/>
</dbReference>
<dbReference type="PANTHER" id="PTHR10422">
    <property type="entry name" value="CYTOCHROME C OXIDASE SUBUNIT 1"/>
    <property type="match status" value="1"/>
</dbReference>
<dbReference type="PANTHER" id="PTHR10422:SF18">
    <property type="entry name" value="CYTOCHROME C OXIDASE SUBUNIT 1"/>
    <property type="match status" value="1"/>
</dbReference>
<dbReference type="Pfam" id="PF00115">
    <property type="entry name" value="COX1"/>
    <property type="match status" value="1"/>
</dbReference>
<dbReference type="Pfam" id="PF03161">
    <property type="entry name" value="LAGLIDADG_2"/>
    <property type="match status" value="1"/>
</dbReference>
<dbReference type="PRINTS" id="PR01165">
    <property type="entry name" value="CYCOXIDASEI"/>
</dbReference>
<dbReference type="SUPFAM" id="SSF81442">
    <property type="entry name" value="Cytochrome c oxidase subunit I-like"/>
    <property type="match status" value="1"/>
</dbReference>
<dbReference type="SUPFAM" id="SSF55608">
    <property type="entry name" value="Homing endonucleases"/>
    <property type="match status" value="1"/>
</dbReference>
<dbReference type="PROSITE" id="PS50855">
    <property type="entry name" value="COX1"/>
    <property type="match status" value="1"/>
</dbReference>
<dbReference type="PROSITE" id="PS00077">
    <property type="entry name" value="COX1_CUB"/>
    <property type="match status" value="1"/>
</dbReference>
<feature type="chain" id="PRO_0000270983" description="Truncated non-functional cytochrome oxidase 1">
    <location>
        <begin position="1"/>
        <end status="unknown"/>
    </location>
</feature>
<feature type="chain" id="PRO_0000270984" description="DNA endonuclease aI5 alpha">
    <location>
        <begin status="unknown"/>
        <end position="630"/>
    </location>
</feature>
<feature type="transmembrane region" description="Helical" evidence="2">
    <location>
        <begin position="16"/>
        <end position="36"/>
    </location>
</feature>
<feature type="transmembrane region" description="Helical" evidence="2">
    <location>
        <begin position="57"/>
        <end position="77"/>
    </location>
</feature>
<feature type="transmembrane region" description="Helical" evidence="2">
    <location>
        <begin position="101"/>
        <end position="121"/>
    </location>
</feature>
<feature type="transmembrane region" description="Helical" evidence="2">
    <location>
        <begin position="147"/>
        <end position="167"/>
    </location>
</feature>
<feature type="transmembrane region" description="Helical" evidence="2">
    <location>
        <begin position="182"/>
        <end position="202"/>
    </location>
</feature>
<feature type="transmembrane region" description="Helical" evidence="2">
    <location>
        <begin position="235"/>
        <end position="255"/>
    </location>
</feature>
<feature type="transmembrane region" description="Helical" evidence="2">
    <location>
        <begin position="267"/>
        <end position="287"/>
    </location>
</feature>
<feature type="transmembrane region" description="Helical" evidence="2">
    <location>
        <begin position="305"/>
        <end position="325"/>
    </location>
</feature>
<feature type="transmembrane region" description="Helical" evidence="2">
    <location>
        <begin position="417"/>
        <end position="437"/>
    </location>
</feature>
<feature type="transmembrane region" description="Helical" evidence="2">
    <location>
        <begin position="464"/>
        <end position="483"/>
    </location>
</feature>
<feature type="region of interest" description="COX1 exons encoded" evidence="2">
    <location>
        <begin position="1"/>
        <end position="324"/>
    </location>
</feature>
<feature type="region of interest" description="COX1 intron aI5_alpha encoded">
    <location>
        <begin position="325"/>
        <end position="630"/>
    </location>
</feature>
<gene>
    <name type="primary">AI5_ALPHA</name>
    <name evidence="5" type="synonym">I-SCEIV</name>
    <name type="ordered locus">Q0070</name>
</gene>
<organism>
    <name type="scientific">Saccharomyces cerevisiae (strain ATCC 204508 / S288c)</name>
    <name type="common">Baker's yeast</name>
    <dbReference type="NCBI Taxonomy" id="559292"/>
    <lineage>
        <taxon>Eukaryota</taxon>
        <taxon>Fungi</taxon>
        <taxon>Dikarya</taxon>
        <taxon>Ascomycota</taxon>
        <taxon>Saccharomycotina</taxon>
        <taxon>Saccharomycetes</taxon>
        <taxon>Saccharomycetales</taxon>
        <taxon>Saccharomycetaceae</taxon>
        <taxon>Saccharomyces</taxon>
    </lineage>
</organism>
<proteinExistence type="evidence at protein level"/>
<geneLocation type="mitochondrion"/>
<reference key="1">
    <citation type="journal article" date="1998" name="FEBS Lett.">
        <title>The complete sequence of the mitochondrial genome of Saccharomyces cerevisiae.</title>
        <authorList>
            <person name="Foury F."/>
            <person name="Roganti T."/>
            <person name="Lecrenier N."/>
            <person name="Purnelle B."/>
        </authorList>
    </citation>
    <scope>NUCLEOTIDE SEQUENCE [LARGE SCALE GENOMIC DNA]</scope>
    <source>
        <strain>ATCC 96604 / S288c / FY1679</strain>
    </source>
</reference>
<reference key="2">
    <citation type="journal article" date="2014" name="G3 (Bethesda)">
        <title>The reference genome sequence of Saccharomyces cerevisiae: Then and now.</title>
        <authorList>
            <person name="Engel S.R."/>
            <person name="Dietrich F.S."/>
            <person name="Fisk D.G."/>
            <person name="Binkley G."/>
            <person name="Balakrishnan R."/>
            <person name="Costanzo M.C."/>
            <person name="Dwight S.S."/>
            <person name="Hitz B.C."/>
            <person name="Karra K."/>
            <person name="Nash R.S."/>
            <person name="Weng S."/>
            <person name="Wong E.D."/>
            <person name="Lloyd P."/>
            <person name="Skrzypek M.S."/>
            <person name="Miyasato S.R."/>
            <person name="Simison M."/>
            <person name="Cherry J.M."/>
        </authorList>
    </citation>
    <scope>GENOME REANNOTATION</scope>
    <source>
        <strain>ATCC 96604 / S288c / FY1679</strain>
    </source>
</reference>
<reference key="3">
    <citation type="journal article" date="1992" name="Gene">
        <title>The yeast mitochondrial intron aI5 alpha: associated endonuclease activity and in vivo mobility.</title>
        <authorList>
            <person name="Seraphin B."/>
            <person name="Faye G."/>
            <person name="Hatat D."/>
            <person name="Jacq C."/>
        </authorList>
    </citation>
    <scope>FUNCTION</scope>
    <scope>CLEAVAGE SITE SPECIFICITY</scope>
    <scope>ENDONUCLEASE ACTIVITY</scope>
    <scope>INTRON HOMING</scope>
</reference>
<reference key="4">
    <citation type="journal article" date="1998" name="Biochem. Biophys. Res. Commun.">
        <title>Structure and activity of the mitochondrial intron-encoded endonuclease, I-SceIV.</title>
        <authorList>
            <person name="Wernette C.M."/>
        </authorList>
    </citation>
    <scope>FUNCTION</scope>
    <scope>COFACTOR</scope>
    <scope>CLEAVAGE SITE SPECIFICITY</scope>
    <scope>ENDONUCLEASE ACTIVITY</scope>
    <scope>PH OPTIMUM</scope>
    <scope>SUBUNIT</scope>
</reference>
<sequence>MVQRWLYSTNAKDIAVLYFMLAIFSGMAGTAMSLIIRLELAAPGSQYLHGNSQLFNVLVVGHAVLMIFFLVMPALIGGFGNYLLPLMIGATDTAFPRINNIAFWVLPMGLVCLVTSTLVESGAGTGWTVYPPLSSIQAHSGPSVDLAIFALHLTSISSLLGAINFIVTTLNMRTNGMTMHKLPLFVWSIFITAFLLLLSLPVLSAGITMLLLDRNFNTSFFEVSGGGDPILYEHLFWFFGHPEVYILIIPGFGIISHVVSTYSKKPVFGEISMVYAMASIGLLGFLVWSHHMYIVGLDADTRAYFTSATMIIAIPTGIKIFSWLMNPFSKDKNKNKNKKLIRNYQKMNNNNMMKTYLNNNNMIMMNMYKGNLYDIYPRSNRNYIQPNNINKELVVYGYNLESCVGMPTYTNIVKHMVGIPNNILYIMTGILLTDGWIDYTSKKDLDKKTIMEINCRFRLKQSMIHSEYLMYVFMLLSHYCMSYPKMKIAKVKGKSYNQLEFYTRSLPCFTILRYMFYNGRVKIVPNNLYDLLNYESLAHMIMCDGSFVKGGGLYLNLQSFTTKELIFIMNILKIKFNLNCTLHKSRNKYTIYMRVESVKRLFPMIYKYILPSMRYKFDIMLWQKKYNMIN</sequence>
<accession>Q9ZZX1</accession>
<accession>A0A0A7NYD1</accession>
<accession>Q8W770</accession>
<evidence type="ECO:0000250" key="1">
    <source>
        <dbReference type="UniProtKB" id="P03878"/>
    </source>
</evidence>
<evidence type="ECO:0000255" key="2"/>
<evidence type="ECO:0000269" key="3">
    <source>
    </source>
</evidence>
<evidence type="ECO:0000269" key="4">
    <source>
    </source>
</evidence>
<evidence type="ECO:0000303" key="5">
    <source>
    </source>
</evidence>
<evidence type="ECO:0000305" key="6"/>
<keyword id="KW-0255">Endonuclease</keyword>
<keyword id="KW-0378">Hydrolase</keyword>
<keyword id="KW-0404">Intron homing</keyword>
<keyword id="KW-0472">Membrane</keyword>
<keyword id="KW-0496">Mitochondrion</keyword>
<keyword id="KW-0507">mRNA processing</keyword>
<keyword id="KW-0508">mRNA splicing</keyword>
<keyword id="KW-0540">Nuclease</keyword>
<keyword id="KW-1185">Reference proteome</keyword>
<keyword id="KW-0812">Transmembrane</keyword>
<keyword id="KW-1133">Transmembrane helix</keyword>
<name>SCE4_YEAST</name>
<comment type="function">
    <text evidence="1 3 4">Mitochondrial DNA endonuclease involved in intron homing. It introduces a specific double-strand break in the DNA of the COX1 gene and thus mediates the insertion of an intron, containing its own coding sequence (group I intron), into an intronless gene. Recognizes with limited specificity and cleaves the sequence 5'-ATCTTCTCTTGATTAGCCCTGATCTACGG-3' after the nucleotide sequence ATTA leaving a four-base overhang and a 3'-OH.</text>
</comment>
<comment type="cofactor">
    <cofactor evidence="4">
        <name>Mg(2+)</name>
        <dbReference type="ChEBI" id="CHEBI:18420"/>
    </cofactor>
</comment>
<comment type="biophysicochemical properties">
    <phDependence>
        <text evidence="4">Optimum pH is 9.5.</text>
    </phDependence>
</comment>
<comment type="subunit">
    <text evidence="4">Heterodimer of a 32 kDa catalytic subunit and a larger 60 kDa polypeptide subunit.</text>
</comment>
<comment type="subcellular location">
    <subcellularLocation>
        <location evidence="6">Mitochondrion</location>
    </subcellularLocation>
    <subcellularLocation>
        <location evidence="2 6">Membrane</location>
        <topology evidence="2 6">Multi-pass membrane protein</topology>
    </subcellularLocation>
</comment>
<comment type="PTM">
    <text evidence="3 4">The mature protein may arise from proteolytic cleavage of an in-frame translation of some COX1 exons plus the intron containing the aI5_alpha open reading frame.</text>
</comment>
<comment type="similarity">
    <text evidence="2">In the N-terminal section; belongs to the heme-copper respiratory oxidase family.</text>
</comment>
<comment type="similarity">
    <text evidence="2">In the C-terminal section; belongs to the LAGLIDADG endonuclease family.</text>
</comment>